<evidence type="ECO:0000255" key="1"/>
<evidence type="ECO:0000255" key="2">
    <source>
        <dbReference type="PROSITE-ProRule" id="PRU00680"/>
    </source>
</evidence>
<evidence type="ECO:0000305" key="3"/>
<gene>
    <name type="primary">SPACA5</name>
    <name type="synonym">LYZL5</name>
    <name type="synonym">SPACA5A</name>
    <name type="ORF">UNQ6288/PRO20753</name>
</gene>
<gene>
    <name type="primary">SPACA5B</name>
</gene>
<accession>Q96QH8</accession>
<accession>Q6UWD1</accession>
<keyword id="KW-1015">Disulfide bond</keyword>
<keyword id="KW-0326">Glycosidase</keyword>
<keyword id="KW-0378">Hydrolase</keyword>
<keyword id="KW-1267">Proteomics identification</keyword>
<keyword id="KW-1185">Reference proteome</keyword>
<keyword id="KW-0964">Secreted</keyword>
<keyword id="KW-0732">Signal</keyword>
<dbReference type="EC" id="3.2.1.17"/>
<dbReference type="EMBL" id="AF217622">
    <property type="protein sequence ID" value="AAQ13890.1"/>
    <property type="molecule type" value="mRNA"/>
</dbReference>
<dbReference type="EMBL" id="AY358844">
    <property type="protein sequence ID" value="AAQ89203.1"/>
    <property type="molecule type" value="mRNA"/>
</dbReference>
<dbReference type="EMBL" id="Z98304">
    <property type="status" value="NOT_ANNOTATED_CDS"/>
    <property type="molecule type" value="Genomic_DNA"/>
</dbReference>
<dbReference type="EMBL" id="AL356464">
    <property type="protein sequence ID" value="CAI40526.1"/>
    <property type="molecule type" value="Genomic_DNA"/>
</dbReference>
<dbReference type="CCDS" id="CCDS14286.1"/>
<dbReference type="CCDS" id="CCDS35238.1"/>
<dbReference type="RefSeq" id="NP_001073369.1">
    <property type="nucleotide sequence ID" value="NM_001079900.1"/>
</dbReference>
<dbReference type="RefSeq" id="NP_001381227.1">
    <property type="nucleotide sequence ID" value="NM_001394298.1"/>
</dbReference>
<dbReference type="RefSeq" id="NP_995328.2">
    <property type="nucleotide sequence ID" value="NM_205856.3"/>
</dbReference>
<dbReference type="RefSeq" id="XP_016885001.1">
    <property type="nucleotide sequence ID" value="XM_017029512.1"/>
</dbReference>
<dbReference type="SMR" id="Q96QH8"/>
<dbReference type="FunCoup" id="Q96QH8">
    <property type="interactions" value="14"/>
</dbReference>
<dbReference type="STRING" id="9606.ENSP00000304762"/>
<dbReference type="CAZy" id="GH22">
    <property type="family name" value="Glycoside Hydrolase Family 22"/>
</dbReference>
<dbReference type="iPTMnet" id="Q96QH8"/>
<dbReference type="PhosphoSitePlus" id="Q96QH8"/>
<dbReference type="BioMuta" id="SPACA5B"/>
<dbReference type="DMDM" id="74761053"/>
<dbReference type="MassIVE" id="Q96QH8"/>
<dbReference type="PaxDb" id="9606-ENSP00000304762"/>
<dbReference type="PeptideAtlas" id="Q96QH8"/>
<dbReference type="ProteomicsDB" id="77880"/>
<dbReference type="Antibodypedia" id="67548">
    <property type="antibodies" value="60 antibodies from 11 providers"/>
</dbReference>
<dbReference type="Antibodypedia" id="73808">
    <property type="antibodies" value="34 antibodies from 5 providers"/>
</dbReference>
<dbReference type="DNASU" id="389852"/>
<dbReference type="DNASU" id="729201"/>
<dbReference type="Ensembl" id="ENST00000304270.6">
    <property type="protein sequence ID" value="ENSP00000304762.5"/>
    <property type="gene ID" value="ENSG00000171478.8"/>
</dbReference>
<dbReference type="Ensembl" id="ENST00000304355.9">
    <property type="protein sequence ID" value="ENSP00000305847.5"/>
    <property type="gene ID" value="ENSG00000171489.11"/>
</dbReference>
<dbReference type="Ensembl" id="ENST00000376940.4">
    <property type="protein sequence ID" value="ENSP00000366139.3"/>
    <property type="gene ID" value="ENSG00000171489.11"/>
</dbReference>
<dbReference type="GeneID" id="389852"/>
<dbReference type="GeneID" id="729201"/>
<dbReference type="KEGG" id="hsa:389852"/>
<dbReference type="KEGG" id="hsa:729201"/>
<dbReference type="MANE-Select" id="ENST00000304270.6">
    <property type="protein sequence ID" value="ENSP00000304762.5"/>
    <property type="RefSeq nucleotide sequence ID" value="NM_001079900.2"/>
    <property type="RefSeq protein sequence ID" value="NP_001073369.1"/>
</dbReference>
<dbReference type="MANE-Select" id="ENST00000376940.4">
    <property type="protein sequence ID" value="ENSP00000366139.3"/>
    <property type="RefSeq nucleotide sequence ID" value="NM_001394298.1"/>
    <property type="RefSeq protein sequence ID" value="NP_001381227.1"/>
</dbReference>
<dbReference type="UCSC" id="uc004diu.5">
    <property type="organism name" value="human"/>
</dbReference>
<dbReference type="AGR" id="HGNC:19142"/>
<dbReference type="AGR" id="HGNC:31353"/>
<dbReference type="CTD" id="389852"/>
<dbReference type="CTD" id="729201"/>
<dbReference type="GeneCards" id="SPACA5"/>
<dbReference type="GeneCards" id="SPACA5B"/>
<dbReference type="HGNC" id="HGNC:31353">
    <property type="gene designation" value="SPACA5"/>
</dbReference>
<dbReference type="HGNC" id="HGNC:19142">
    <property type="gene designation" value="SPACA5B"/>
</dbReference>
<dbReference type="HPA" id="ENSG00000171478">
    <property type="expression patterns" value="Tissue enriched (testis)"/>
</dbReference>
<dbReference type="HPA" id="ENSG00000171489">
    <property type="expression patterns" value="Tissue enriched (testis)"/>
</dbReference>
<dbReference type="MIM" id="300593">
    <property type="type" value="gene"/>
</dbReference>
<dbReference type="neXtProt" id="NX_Q96QH8"/>
<dbReference type="OpenTargets" id="ENSG00000171489"/>
<dbReference type="PharmGKB" id="PA162404365"/>
<dbReference type="VEuPathDB" id="HostDB:ENSG00000171478"/>
<dbReference type="VEuPathDB" id="HostDB:ENSG00000171489"/>
<dbReference type="eggNOG" id="ENOG502SUHW">
    <property type="taxonomic scope" value="Eukaryota"/>
</dbReference>
<dbReference type="GeneTree" id="ENSGT00940000162205"/>
<dbReference type="HOGENOM" id="CLU_111620_0_1_1"/>
<dbReference type="InParanoid" id="Q96QH8"/>
<dbReference type="OMA" id="AWWCNNG"/>
<dbReference type="OrthoDB" id="17373at2759"/>
<dbReference type="PAN-GO" id="Q96QH8">
    <property type="GO annotations" value="1 GO annotation based on evolutionary models"/>
</dbReference>
<dbReference type="PhylomeDB" id="Q96QH8"/>
<dbReference type="TreeFam" id="TF324882"/>
<dbReference type="PathwayCommons" id="Q96QH8"/>
<dbReference type="BioGRID-ORCS" id="389852">
    <property type="hits" value="9 hits in 283 CRISPR screens"/>
</dbReference>
<dbReference type="BioGRID-ORCS" id="729201">
    <property type="hits" value="3 hits in 220 CRISPR screens"/>
</dbReference>
<dbReference type="Pharos" id="Q96QH8">
    <property type="development level" value="Tbio"/>
</dbReference>
<dbReference type="PRO" id="PR:Q96QH8"/>
<dbReference type="Proteomes" id="UP000005640">
    <property type="component" value="Chromosome X"/>
</dbReference>
<dbReference type="RNAct" id="Q96QH8">
    <property type="molecule type" value="protein"/>
</dbReference>
<dbReference type="Bgee" id="ENSG00000171478">
    <property type="expression patterns" value="Expressed in male germ line stem cell (sensu Vertebrata) in testis and 68 other cell types or tissues"/>
</dbReference>
<dbReference type="ExpressionAtlas" id="Q96QH8">
    <property type="expression patterns" value="baseline and differential"/>
</dbReference>
<dbReference type="GO" id="GO:0001669">
    <property type="term" value="C:acrosomal vesicle"/>
    <property type="evidence" value="ECO:0000318"/>
    <property type="project" value="GO_Central"/>
</dbReference>
<dbReference type="GO" id="GO:0005576">
    <property type="term" value="C:extracellular region"/>
    <property type="evidence" value="ECO:0007669"/>
    <property type="project" value="UniProtKB-SubCell"/>
</dbReference>
<dbReference type="GO" id="GO:0036126">
    <property type="term" value="C:sperm flagellum"/>
    <property type="evidence" value="ECO:0000318"/>
    <property type="project" value="GO_Central"/>
</dbReference>
<dbReference type="GO" id="GO:0003796">
    <property type="term" value="F:lysozyme activity"/>
    <property type="evidence" value="ECO:0000318"/>
    <property type="project" value="GO_Central"/>
</dbReference>
<dbReference type="GO" id="GO:0007342">
    <property type="term" value="P:fusion of sperm to egg plasma membrane involved in single fertilization"/>
    <property type="evidence" value="ECO:0000318"/>
    <property type="project" value="GO_Central"/>
</dbReference>
<dbReference type="CDD" id="cd16897">
    <property type="entry name" value="LYZ_C"/>
    <property type="match status" value="1"/>
</dbReference>
<dbReference type="FunFam" id="1.10.530.10:FF:000001">
    <property type="entry name" value="Lysozyme C"/>
    <property type="match status" value="1"/>
</dbReference>
<dbReference type="Gene3D" id="1.10.530.10">
    <property type="match status" value="1"/>
</dbReference>
<dbReference type="InterPro" id="IPR001916">
    <property type="entry name" value="Glyco_hydro_22"/>
</dbReference>
<dbReference type="InterPro" id="IPR000974">
    <property type="entry name" value="Glyco_hydro_22_lys"/>
</dbReference>
<dbReference type="InterPro" id="IPR023346">
    <property type="entry name" value="Lysozyme-like_dom_sf"/>
</dbReference>
<dbReference type="PANTHER" id="PTHR11407">
    <property type="entry name" value="LYSOZYME C"/>
    <property type="match status" value="1"/>
</dbReference>
<dbReference type="PANTHER" id="PTHR11407:SF31">
    <property type="entry name" value="SPERM ACROSOME-ASSOCIATED PROTEIN 5"/>
    <property type="match status" value="1"/>
</dbReference>
<dbReference type="Pfam" id="PF00062">
    <property type="entry name" value="Lys"/>
    <property type="match status" value="1"/>
</dbReference>
<dbReference type="PRINTS" id="PR00137">
    <property type="entry name" value="LYSOZYME"/>
</dbReference>
<dbReference type="PRINTS" id="PR00135">
    <property type="entry name" value="LYZLACT"/>
</dbReference>
<dbReference type="SMART" id="SM00263">
    <property type="entry name" value="LYZ1"/>
    <property type="match status" value="1"/>
</dbReference>
<dbReference type="SUPFAM" id="SSF53955">
    <property type="entry name" value="Lysozyme-like"/>
    <property type="match status" value="1"/>
</dbReference>
<dbReference type="PROSITE" id="PS51348">
    <property type="entry name" value="GLYCOSYL_HYDROL_F22_2"/>
    <property type="match status" value="1"/>
</dbReference>
<proteinExistence type="evidence at protein level"/>
<protein>
    <recommendedName>
        <fullName>Sperm acrosome-associated protein 5</fullName>
        <ecNumber>3.2.1.17</ecNumber>
    </recommendedName>
    <alternativeName>
        <fullName>Lysozyme-like protein 5</fullName>
    </alternativeName>
    <alternativeName>
        <fullName>Sperm-specific lysozyme-like protein X</fullName>
        <shortName>SLLP-X</shortName>
    </alternativeName>
</protein>
<feature type="signal peptide" evidence="1">
    <location>
        <begin position="1"/>
        <end position="21"/>
    </location>
</feature>
<feature type="chain" id="PRO_0000284470" description="Sperm acrosome-associated protein 5">
    <location>
        <begin position="22"/>
        <end position="159"/>
    </location>
</feature>
<feature type="domain" description="C-type lysozyme" evidence="2">
    <location>
        <begin position="22"/>
        <end position="150"/>
    </location>
</feature>
<feature type="active site" evidence="2">
    <location>
        <position position="56"/>
    </location>
</feature>
<feature type="disulfide bond" evidence="2">
    <location>
        <begin position="27"/>
        <end position="147"/>
    </location>
</feature>
<feature type="disulfide bond" evidence="2">
    <location>
        <begin position="51"/>
        <end position="135"/>
    </location>
</feature>
<feature type="disulfide bond" evidence="2">
    <location>
        <begin position="85"/>
        <end position="100"/>
    </location>
</feature>
<feature type="disulfide bond" evidence="2">
    <location>
        <begin position="96"/>
        <end position="114"/>
    </location>
</feature>
<feature type="sequence conflict" description="In Ref. 1; AAQ89203." evidence="3" ref="1">
    <original>R</original>
    <variation>L</variation>
    <location>
        <position position="26"/>
    </location>
</feature>
<name>LYZL5_HUMAN</name>
<sequence>MKAWGTVVVTLATLMVVTVDAKIYERCELAARLERAGLNGYKGYGVGDWLCMAHYESGFDTAFVDHNPDGSSEYGIFQLNSAWWCDNGITPTKNLCHMDCHDLLNRHILDDIRCAKQIVSSQNGLSAWTSWRLHCSGHDLSEWLKGCDMHVKIDPKIHP</sequence>
<organism>
    <name type="scientific">Homo sapiens</name>
    <name type="common">Human</name>
    <dbReference type="NCBI Taxonomy" id="9606"/>
    <lineage>
        <taxon>Eukaryota</taxon>
        <taxon>Metazoa</taxon>
        <taxon>Chordata</taxon>
        <taxon>Craniata</taxon>
        <taxon>Vertebrata</taxon>
        <taxon>Euteleostomi</taxon>
        <taxon>Mammalia</taxon>
        <taxon>Eutheria</taxon>
        <taxon>Euarchontoglires</taxon>
        <taxon>Primates</taxon>
        <taxon>Haplorrhini</taxon>
        <taxon>Catarrhini</taxon>
        <taxon>Hominidae</taxon>
        <taxon>Homo</taxon>
    </lineage>
</organism>
<reference key="1">
    <citation type="submission" date="1999-12" db="EMBL/GenBank/DDBJ databases">
        <title>Cloning of a novel lysozyme like human sperm-specific secretory protein SLLP-X which maps to the X chromosome.</title>
        <authorList>
            <person name="Mandal A."/>
            <person name="Herr J.C."/>
        </authorList>
    </citation>
    <scope>NUCLEOTIDE SEQUENCE [MRNA]</scope>
    <source>
        <tissue>Testis</tissue>
    </source>
</reference>
<reference key="2">
    <citation type="journal article" date="2003" name="Genome Res.">
        <title>The secreted protein discovery initiative (SPDI), a large-scale effort to identify novel human secreted and transmembrane proteins: a bioinformatics assessment.</title>
        <authorList>
            <person name="Clark H.F."/>
            <person name="Gurney A.L."/>
            <person name="Abaya E."/>
            <person name="Baker K."/>
            <person name="Baldwin D.T."/>
            <person name="Brush J."/>
            <person name="Chen J."/>
            <person name="Chow B."/>
            <person name="Chui C."/>
            <person name="Crowley C."/>
            <person name="Currell B."/>
            <person name="Deuel B."/>
            <person name="Dowd P."/>
            <person name="Eaton D."/>
            <person name="Foster J.S."/>
            <person name="Grimaldi C."/>
            <person name="Gu Q."/>
            <person name="Hass P.E."/>
            <person name="Heldens S."/>
            <person name="Huang A."/>
            <person name="Kim H.S."/>
            <person name="Klimowski L."/>
            <person name="Jin Y."/>
            <person name="Johnson S."/>
            <person name="Lee J."/>
            <person name="Lewis L."/>
            <person name="Liao D."/>
            <person name="Mark M.R."/>
            <person name="Robbie E."/>
            <person name="Sanchez C."/>
            <person name="Schoenfeld J."/>
            <person name="Seshagiri S."/>
            <person name="Simmons L."/>
            <person name="Singh J."/>
            <person name="Smith V."/>
            <person name="Stinson J."/>
            <person name="Vagts A."/>
            <person name="Vandlen R.L."/>
            <person name="Watanabe C."/>
            <person name="Wieand D."/>
            <person name="Woods K."/>
            <person name="Xie M.-H."/>
            <person name="Yansura D.G."/>
            <person name="Yi S."/>
            <person name="Yu G."/>
            <person name="Yuan J."/>
            <person name="Zhang M."/>
            <person name="Zhang Z."/>
            <person name="Goddard A.D."/>
            <person name="Wood W.I."/>
            <person name="Godowski P.J."/>
            <person name="Gray A.M."/>
        </authorList>
    </citation>
    <scope>NUCLEOTIDE SEQUENCE [LARGE SCALE MRNA]</scope>
</reference>
<reference key="3">
    <citation type="journal article" date="2005" name="Nature">
        <title>The DNA sequence of the human X chromosome.</title>
        <authorList>
            <person name="Ross M.T."/>
            <person name="Grafham D.V."/>
            <person name="Coffey A.J."/>
            <person name="Scherer S."/>
            <person name="McLay K."/>
            <person name="Muzny D."/>
            <person name="Platzer M."/>
            <person name="Howell G.R."/>
            <person name="Burrows C."/>
            <person name="Bird C.P."/>
            <person name="Frankish A."/>
            <person name="Lovell F.L."/>
            <person name="Howe K.L."/>
            <person name="Ashurst J.L."/>
            <person name="Fulton R.S."/>
            <person name="Sudbrak R."/>
            <person name="Wen G."/>
            <person name="Jones M.C."/>
            <person name="Hurles M.E."/>
            <person name="Andrews T.D."/>
            <person name="Scott C.E."/>
            <person name="Searle S."/>
            <person name="Ramser J."/>
            <person name="Whittaker A."/>
            <person name="Deadman R."/>
            <person name="Carter N.P."/>
            <person name="Hunt S.E."/>
            <person name="Chen R."/>
            <person name="Cree A."/>
            <person name="Gunaratne P."/>
            <person name="Havlak P."/>
            <person name="Hodgson A."/>
            <person name="Metzker M.L."/>
            <person name="Richards S."/>
            <person name="Scott G."/>
            <person name="Steffen D."/>
            <person name="Sodergren E."/>
            <person name="Wheeler D.A."/>
            <person name="Worley K.C."/>
            <person name="Ainscough R."/>
            <person name="Ambrose K.D."/>
            <person name="Ansari-Lari M.A."/>
            <person name="Aradhya S."/>
            <person name="Ashwell R.I."/>
            <person name="Babbage A.K."/>
            <person name="Bagguley C.L."/>
            <person name="Ballabio A."/>
            <person name="Banerjee R."/>
            <person name="Barker G.E."/>
            <person name="Barlow K.F."/>
            <person name="Barrett I.P."/>
            <person name="Bates K.N."/>
            <person name="Beare D.M."/>
            <person name="Beasley H."/>
            <person name="Beasley O."/>
            <person name="Beck A."/>
            <person name="Bethel G."/>
            <person name="Blechschmidt K."/>
            <person name="Brady N."/>
            <person name="Bray-Allen S."/>
            <person name="Bridgeman A.M."/>
            <person name="Brown A.J."/>
            <person name="Brown M.J."/>
            <person name="Bonnin D."/>
            <person name="Bruford E.A."/>
            <person name="Buhay C."/>
            <person name="Burch P."/>
            <person name="Burford D."/>
            <person name="Burgess J."/>
            <person name="Burrill W."/>
            <person name="Burton J."/>
            <person name="Bye J.M."/>
            <person name="Carder C."/>
            <person name="Carrel L."/>
            <person name="Chako J."/>
            <person name="Chapman J.C."/>
            <person name="Chavez D."/>
            <person name="Chen E."/>
            <person name="Chen G."/>
            <person name="Chen Y."/>
            <person name="Chen Z."/>
            <person name="Chinault C."/>
            <person name="Ciccodicola A."/>
            <person name="Clark S.Y."/>
            <person name="Clarke G."/>
            <person name="Clee C.M."/>
            <person name="Clegg S."/>
            <person name="Clerc-Blankenburg K."/>
            <person name="Clifford K."/>
            <person name="Cobley V."/>
            <person name="Cole C.G."/>
            <person name="Conquer J.S."/>
            <person name="Corby N."/>
            <person name="Connor R.E."/>
            <person name="David R."/>
            <person name="Davies J."/>
            <person name="Davis C."/>
            <person name="Davis J."/>
            <person name="Delgado O."/>
            <person name="Deshazo D."/>
            <person name="Dhami P."/>
            <person name="Ding Y."/>
            <person name="Dinh H."/>
            <person name="Dodsworth S."/>
            <person name="Draper H."/>
            <person name="Dugan-Rocha S."/>
            <person name="Dunham A."/>
            <person name="Dunn M."/>
            <person name="Durbin K.J."/>
            <person name="Dutta I."/>
            <person name="Eades T."/>
            <person name="Ellwood M."/>
            <person name="Emery-Cohen A."/>
            <person name="Errington H."/>
            <person name="Evans K.L."/>
            <person name="Faulkner L."/>
            <person name="Francis F."/>
            <person name="Frankland J."/>
            <person name="Fraser A.E."/>
            <person name="Galgoczy P."/>
            <person name="Gilbert J."/>
            <person name="Gill R."/>
            <person name="Gloeckner G."/>
            <person name="Gregory S.G."/>
            <person name="Gribble S."/>
            <person name="Griffiths C."/>
            <person name="Grocock R."/>
            <person name="Gu Y."/>
            <person name="Gwilliam R."/>
            <person name="Hamilton C."/>
            <person name="Hart E.A."/>
            <person name="Hawes A."/>
            <person name="Heath P.D."/>
            <person name="Heitmann K."/>
            <person name="Hennig S."/>
            <person name="Hernandez J."/>
            <person name="Hinzmann B."/>
            <person name="Ho S."/>
            <person name="Hoffs M."/>
            <person name="Howden P.J."/>
            <person name="Huckle E.J."/>
            <person name="Hume J."/>
            <person name="Hunt P.J."/>
            <person name="Hunt A.R."/>
            <person name="Isherwood J."/>
            <person name="Jacob L."/>
            <person name="Johnson D."/>
            <person name="Jones S."/>
            <person name="de Jong P.J."/>
            <person name="Joseph S.S."/>
            <person name="Keenan S."/>
            <person name="Kelly S."/>
            <person name="Kershaw J.K."/>
            <person name="Khan Z."/>
            <person name="Kioschis P."/>
            <person name="Klages S."/>
            <person name="Knights A.J."/>
            <person name="Kosiura A."/>
            <person name="Kovar-Smith C."/>
            <person name="Laird G.K."/>
            <person name="Langford C."/>
            <person name="Lawlor S."/>
            <person name="Leversha M."/>
            <person name="Lewis L."/>
            <person name="Liu W."/>
            <person name="Lloyd C."/>
            <person name="Lloyd D.M."/>
            <person name="Loulseged H."/>
            <person name="Loveland J.E."/>
            <person name="Lovell J.D."/>
            <person name="Lozado R."/>
            <person name="Lu J."/>
            <person name="Lyne R."/>
            <person name="Ma J."/>
            <person name="Maheshwari M."/>
            <person name="Matthews L.H."/>
            <person name="McDowall J."/>
            <person name="McLaren S."/>
            <person name="McMurray A."/>
            <person name="Meidl P."/>
            <person name="Meitinger T."/>
            <person name="Milne S."/>
            <person name="Miner G."/>
            <person name="Mistry S.L."/>
            <person name="Morgan M."/>
            <person name="Morris S."/>
            <person name="Mueller I."/>
            <person name="Mullikin J.C."/>
            <person name="Nguyen N."/>
            <person name="Nordsiek G."/>
            <person name="Nyakatura G."/>
            <person name="O'dell C.N."/>
            <person name="Okwuonu G."/>
            <person name="Palmer S."/>
            <person name="Pandian R."/>
            <person name="Parker D."/>
            <person name="Parrish J."/>
            <person name="Pasternak S."/>
            <person name="Patel D."/>
            <person name="Pearce A.V."/>
            <person name="Pearson D.M."/>
            <person name="Pelan S.E."/>
            <person name="Perez L."/>
            <person name="Porter K.M."/>
            <person name="Ramsey Y."/>
            <person name="Reichwald K."/>
            <person name="Rhodes S."/>
            <person name="Ridler K.A."/>
            <person name="Schlessinger D."/>
            <person name="Schueler M.G."/>
            <person name="Sehra H.K."/>
            <person name="Shaw-Smith C."/>
            <person name="Shen H."/>
            <person name="Sheridan E.M."/>
            <person name="Shownkeen R."/>
            <person name="Skuce C.D."/>
            <person name="Smith M.L."/>
            <person name="Sotheran E.C."/>
            <person name="Steingruber H.E."/>
            <person name="Steward C.A."/>
            <person name="Storey R."/>
            <person name="Swann R.M."/>
            <person name="Swarbreck D."/>
            <person name="Tabor P.E."/>
            <person name="Taudien S."/>
            <person name="Taylor T."/>
            <person name="Teague B."/>
            <person name="Thomas K."/>
            <person name="Thorpe A."/>
            <person name="Timms K."/>
            <person name="Tracey A."/>
            <person name="Trevanion S."/>
            <person name="Tromans A.C."/>
            <person name="d'Urso M."/>
            <person name="Verduzco D."/>
            <person name="Villasana D."/>
            <person name="Waldron L."/>
            <person name="Wall M."/>
            <person name="Wang Q."/>
            <person name="Warren J."/>
            <person name="Warry G.L."/>
            <person name="Wei X."/>
            <person name="West A."/>
            <person name="Whitehead S.L."/>
            <person name="Whiteley M.N."/>
            <person name="Wilkinson J.E."/>
            <person name="Willey D.L."/>
            <person name="Williams G."/>
            <person name="Williams L."/>
            <person name="Williamson A."/>
            <person name="Williamson H."/>
            <person name="Wilming L."/>
            <person name="Woodmansey R.L."/>
            <person name="Wray P.W."/>
            <person name="Yen J."/>
            <person name="Zhang J."/>
            <person name="Zhou J."/>
            <person name="Zoghbi H."/>
            <person name="Zorilla S."/>
            <person name="Buck D."/>
            <person name="Reinhardt R."/>
            <person name="Poustka A."/>
            <person name="Rosenthal A."/>
            <person name="Lehrach H."/>
            <person name="Meindl A."/>
            <person name="Minx P.J."/>
            <person name="Hillier L.W."/>
            <person name="Willard H.F."/>
            <person name="Wilson R.K."/>
            <person name="Waterston R.H."/>
            <person name="Rice C.M."/>
            <person name="Vaudin M."/>
            <person name="Coulson A."/>
            <person name="Nelson D.L."/>
            <person name="Weinstock G."/>
            <person name="Sulston J.E."/>
            <person name="Durbin R.M."/>
            <person name="Hubbard T."/>
            <person name="Gibbs R.A."/>
            <person name="Beck S."/>
            <person name="Rogers J."/>
            <person name="Bentley D.R."/>
        </authorList>
    </citation>
    <scope>NUCLEOTIDE SEQUENCE [LARGE SCALE GENOMIC DNA]</scope>
</reference>
<reference key="4">
    <citation type="journal article" date="2006" name="Genes Chromosomes Cancer">
        <title>Identification of a new cancer/testis gene family, CT47, among expressed multicopy genes on the human X chromosome.</title>
        <authorList>
            <person name="Chen Y.-T."/>
            <person name="Iseli C."/>
            <person name="Venditti C.A."/>
            <person name="Old L.J."/>
            <person name="Simpson A.J.G."/>
            <person name="Jongeneel C.V."/>
        </authorList>
    </citation>
    <scope>IDENTIFICATION</scope>
</reference>
<comment type="catalytic activity">
    <reaction>
        <text>Hydrolysis of (1-&gt;4)-beta-linkages between N-acetylmuramic acid and N-acetyl-D-glucosamine residues in a peptidoglycan and between N-acetyl-D-glucosamine residues in chitodextrins.</text>
        <dbReference type="EC" id="3.2.1.17"/>
    </reaction>
</comment>
<comment type="subcellular location">
    <subcellularLocation>
        <location evidence="3">Secreted</location>
    </subcellularLocation>
</comment>
<comment type="similarity">
    <text evidence="2">Belongs to the glycosyl hydrolase 22 family.</text>
</comment>